<feature type="chain" id="PRO_0000309257" description="HTH-type transcriptional regulator SgrR">
    <location>
        <begin position="1"/>
        <end position="553"/>
    </location>
</feature>
<feature type="domain" description="HTH marR-type" evidence="1">
    <location>
        <begin position="1"/>
        <end position="113"/>
    </location>
</feature>
<feature type="DNA-binding region" description="H-T-H motif" evidence="1">
    <location>
        <begin position="26"/>
        <end position="49"/>
    </location>
</feature>
<feature type="region of interest" description="Solute-binding" evidence="1">
    <location>
        <begin position="163"/>
        <end position="494"/>
    </location>
</feature>
<feature type="sequence conflict" description="In Ref. 2; AAM87198." evidence="2" ref="2">
    <original>S</original>
    <variation>T</variation>
    <location>
        <position position="415"/>
    </location>
</feature>
<reference key="1">
    <citation type="journal article" date="2004" name="DNA Res.">
        <title>Complete genome sequence of Yersinia pestis strain 91001, an isolate avirulent to humans.</title>
        <authorList>
            <person name="Song Y."/>
            <person name="Tong Z."/>
            <person name="Wang J."/>
            <person name="Wang L."/>
            <person name="Guo Z."/>
            <person name="Han Y."/>
            <person name="Zhang J."/>
            <person name="Pei D."/>
            <person name="Zhou D."/>
            <person name="Qin H."/>
            <person name="Pang X."/>
            <person name="Han Y."/>
            <person name="Zhai J."/>
            <person name="Li M."/>
            <person name="Cui B."/>
            <person name="Qi Z."/>
            <person name="Jin L."/>
            <person name="Dai R."/>
            <person name="Chen F."/>
            <person name="Li S."/>
            <person name="Ye C."/>
            <person name="Du Z."/>
            <person name="Lin W."/>
            <person name="Wang J."/>
            <person name="Yu J."/>
            <person name="Yang H."/>
            <person name="Wang J."/>
            <person name="Huang P."/>
            <person name="Yang R."/>
        </authorList>
    </citation>
    <scope>NUCLEOTIDE SEQUENCE [LARGE SCALE GENOMIC DNA]</scope>
    <source>
        <strain>91001 / Biovar Mediaevalis</strain>
    </source>
</reference>
<reference key="2">
    <citation type="journal article" date="2002" name="J. Bacteriol.">
        <title>Genome sequence of Yersinia pestis KIM.</title>
        <authorList>
            <person name="Deng W."/>
            <person name="Burland V."/>
            <person name="Plunkett G. III"/>
            <person name="Boutin A."/>
            <person name="Mayhew G.F."/>
            <person name="Liss P."/>
            <person name="Perna N.T."/>
            <person name="Rose D.J."/>
            <person name="Mau B."/>
            <person name="Zhou S."/>
            <person name="Schwartz D.C."/>
            <person name="Fetherston J.D."/>
            <person name="Lindler L.E."/>
            <person name="Brubaker R.R."/>
            <person name="Plano G.V."/>
            <person name="Straley S.C."/>
            <person name="McDonough K.A."/>
            <person name="Nilles M.L."/>
            <person name="Matson J.S."/>
            <person name="Blattner F.R."/>
            <person name="Perry R.D."/>
        </authorList>
    </citation>
    <scope>NUCLEOTIDE SEQUENCE [LARGE SCALE GENOMIC DNA]</scope>
    <source>
        <strain>KIM10+ / Biovar Mediaevalis</strain>
    </source>
</reference>
<reference key="3">
    <citation type="journal article" date="2001" name="Nature">
        <title>Genome sequence of Yersinia pestis, the causative agent of plague.</title>
        <authorList>
            <person name="Parkhill J."/>
            <person name="Wren B.W."/>
            <person name="Thomson N.R."/>
            <person name="Titball R.W."/>
            <person name="Holden M.T.G."/>
            <person name="Prentice M.B."/>
            <person name="Sebaihia M."/>
            <person name="James K.D."/>
            <person name="Churcher C.M."/>
            <person name="Mungall K.L."/>
            <person name="Baker S."/>
            <person name="Basham D."/>
            <person name="Bentley S.D."/>
            <person name="Brooks K."/>
            <person name="Cerdeno-Tarraga A.-M."/>
            <person name="Chillingworth T."/>
            <person name="Cronin A."/>
            <person name="Davies R.M."/>
            <person name="Davis P."/>
            <person name="Dougan G."/>
            <person name="Feltwell T."/>
            <person name="Hamlin N."/>
            <person name="Holroyd S."/>
            <person name="Jagels K."/>
            <person name="Karlyshev A.V."/>
            <person name="Leather S."/>
            <person name="Moule S."/>
            <person name="Oyston P.C.F."/>
            <person name="Quail M.A."/>
            <person name="Rutherford K.M."/>
            <person name="Simmonds M."/>
            <person name="Skelton J."/>
            <person name="Stevens K."/>
            <person name="Whitehead S."/>
            <person name="Barrell B.G."/>
        </authorList>
    </citation>
    <scope>NUCLEOTIDE SEQUENCE [LARGE SCALE GENOMIC DNA]</scope>
    <source>
        <strain>CO-92 / Biovar Orientalis</strain>
    </source>
</reference>
<dbReference type="EMBL" id="AE017042">
    <property type="protein sequence ID" value="AAS63803.1"/>
    <property type="molecule type" value="Genomic_DNA"/>
</dbReference>
<dbReference type="EMBL" id="AE009952">
    <property type="protein sequence ID" value="AAM87198.1"/>
    <property type="molecule type" value="Genomic_DNA"/>
</dbReference>
<dbReference type="EMBL" id="AL590842">
    <property type="protein sequence ID" value="CAL19205.1"/>
    <property type="molecule type" value="Genomic_DNA"/>
</dbReference>
<dbReference type="PIR" id="AC0065">
    <property type="entry name" value="AC0065"/>
</dbReference>
<dbReference type="RefSeq" id="WP_002210461.1">
    <property type="nucleotide sequence ID" value="NZ_WHLN01000026.1"/>
</dbReference>
<dbReference type="RefSeq" id="YP_002345598.1">
    <property type="nucleotide sequence ID" value="NC_003143.1"/>
</dbReference>
<dbReference type="SMR" id="Q74Q56"/>
<dbReference type="IntAct" id="Q74Q56">
    <property type="interactions" value="2"/>
</dbReference>
<dbReference type="STRING" id="214092.YPO0524"/>
<dbReference type="PaxDb" id="214092-YPO0524"/>
<dbReference type="DNASU" id="1148597"/>
<dbReference type="EnsemblBacteria" id="AAS63803">
    <property type="protein sequence ID" value="AAS63803"/>
    <property type="gene ID" value="YP_3655"/>
</dbReference>
<dbReference type="GeneID" id="57974087"/>
<dbReference type="KEGG" id="ype:YPO0524"/>
<dbReference type="KEGG" id="ypk:y3650"/>
<dbReference type="KEGG" id="ypm:YP_3655"/>
<dbReference type="PATRIC" id="fig|214092.21.peg.776"/>
<dbReference type="eggNOG" id="COG4533">
    <property type="taxonomic scope" value="Bacteria"/>
</dbReference>
<dbReference type="HOGENOM" id="CLU_017028_12_3_6"/>
<dbReference type="OMA" id="WLTWQAE"/>
<dbReference type="OrthoDB" id="5894719at2"/>
<dbReference type="Proteomes" id="UP000000815">
    <property type="component" value="Chromosome"/>
</dbReference>
<dbReference type="Proteomes" id="UP000001019">
    <property type="component" value="Chromosome"/>
</dbReference>
<dbReference type="Proteomes" id="UP000002490">
    <property type="component" value="Chromosome"/>
</dbReference>
<dbReference type="GO" id="GO:0003677">
    <property type="term" value="F:DNA binding"/>
    <property type="evidence" value="ECO:0007669"/>
    <property type="project" value="UniProtKB-KW"/>
</dbReference>
<dbReference type="GO" id="GO:1904680">
    <property type="term" value="F:peptide transmembrane transporter activity"/>
    <property type="evidence" value="ECO:0000318"/>
    <property type="project" value="GO_Central"/>
</dbReference>
<dbReference type="GO" id="GO:0045892">
    <property type="term" value="P:negative regulation of DNA-templated transcription"/>
    <property type="evidence" value="ECO:0007669"/>
    <property type="project" value="UniProtKB-UniRule"/>
</dbReference>
<dbReference type="GO" id="GO:0015833">
    <property type="term" value="P:peptide transport"/>
    <property type="evidence" value="ECO:0000318"/>
    <property type="project" value="GO_Central"/>
</dbReference>
<dbReference type="GO" id="GO:0045893">
    <property type="term" value="P:positive regulation of DNA-templated transcription"/>
    <property type="evidence" value="ECO:0007669"/>
    <property type="project" value="UniProtKB-UniRule"/>
</dbReference>
<dbReference type="CDD" id="cd08507">
    <property type="entry name" value="PBP2_SgrR_like"/>
    <property type="match status" value="1"/>
</dbReference>
<dbReference type="FunFam" id="3.40.190.10:FF:000070">
    <property type="entry name" value="HTH-type transcriptional regulator SgrR"/>
    <property type="match status" value="1"/>
</dbReference>
<dbReference type="Gene3D" id="3.40.190.10">
    <property type="entry name" value="Periplasmic binding protein-like II"/>
    <property type="match status" value="1"/>
</dbReference>
<dbReference type="HAMAP" id="MF_01449">
    <property type="entry name" value="HTH_type_SgrR"/>
    <property type="match status" value="1"/>
</dbReference>
<dbReference type="InterPro" id="IPR039424">
    <property type="entry name" value="SBP_5"/>
</dbReference>
<dbReference type="InterPro" id="IPR000914">
    <property type="entry name" value="SBP_5_dom"/>
</dbReference>
<dbReference type="InterPro" id="IPR025370">
    <property type="entry name" value="SgrR_HTH_N"/>
</dbReference>
<dbReference type="InterPro" id="IPR023767">
    <property type="entry name" value="Tscrpt_reg_SgrR"/>
</dbReference>
<dbReference type="InterPro" id="IPR036390">
    <property type="entry name" value="WH_DNA-bd_sf"/>
</dbReference>
<dbReference type="NCBIfam" id="NF010149">
    <property type="entry name" value="PRK13626.1"/>
    <property type="match status" value="1"/>
</dbReference>
<dbReference type="PANTHER" id="PTHR30290:SF72">
    <property type="entry name" value="HTH-TYPE TRANSCRIPTIONAL REGULATOR SGRR"/>
    <property type="match status" value="1"/>
</dbReference>
<dbReference type="PANTHER" id="PTHR30290">
    <property type="entry name" value="PERIPLASMIC BINDING COMPONENT OF ABC TRANSPORTER"/>
    <property type="match status" value="1"/>
</dbReference>
<dbReference type="Pfam" id="PF00496">
    <property type="entry name" value="SBP_bac_5"/>
    <property type="match status" value="1"/>
</dbReference>
<dbReference type="Pfam" id="PF12793">
    <property type="entry name" value="SgrR_N"/>
    <property type="match status" value="1"/>
</dbReference>
<dbReference type="SUPFAM" id="SSF53850">
    <property type="entry name" value="Periplasmic binding protein-like II"/>
    <property type="match status" value="1"/>
</dbReference>
<dbReference type="SUPFAM" id="SSF46785">
    <property type="entry name" value="Winged helix' DNA-binding domain"/>
    <property type="match status" value="1"/>
</dbReference>
<comment type="function">
    <text evidence="1">Activates the small RNA gene sgrS under glucose-phosphate stress conditions as well as yfdZ. Represses its own transcription under both stress and non-stress conditions. Might act as a sensor of the intracellular accumulation of phosphoglucose by binding these molecules in its C-terminal solute-binding domain.</text>
</comment>
<sequence length="553" mass="64849">MSTSRLQQQFIRLWQRYNGQSTETTLQALAEVLNCSRRHVRSLLGKMQHAGWLDWQAEAGRGKRSQLIFLRSGLALQQQRAEELLEQDHIDQLVQLVGDKKAVRQMLLSQLGRSFRQGKHILRVLYYRPLENLLPGTALRRSETHMVRQIFNGLTRINEENGELEPDLSHHWQAITPLHWRFYLRPAIHFHHGRELEMSDVISSLTRLIPQPLFSHIAEVRSPTPYVIDVYLHSPDHWLPWLLGSVHAMILPQEWETQPDFHRQPIGTGPYSVIRNHHSQLKIQAFDNYFGFRALIDEVNIWVLPELSEELVYSGVQLQADDTGKNELESRLEEGCYFLLFDQRSPQACTPEIRRWLCELITPIALLSHAAPFYQRYWSPAYGMLPRWHHNRLTTQEPKPEGLNELTLTFYSEHSEFDAISQTLTQLLAAQGVTLKIQVLDYTRWYQGDAQSDIWLGSANFYLPLEFSLFATLYEMPLLQHCLSEELHQDIESWRNNTLLMADWSQRLVSQHQFHPLFHHWLELYGQHSMRGVRMNTLGWFDFKSAWFTPPEA</sequence>
<accession>Q74Q56</accession>
<accession>Q8CZP9</accession>
<proteinExistence type="inferred from homology"/>
<protein>
    <recommendedName>
        <fullName evidence="1">HTH-type transcriptional regulator SgrR</fullName>
    </recommendedName>
</protein>
<name>SGRR_YERPE</name>
<keyword id="KW-0010">Activator</keyword>
<keyword id="KW-0238">DNA-binding</keyword>
<keyword id="KW-1185">Reference proteome</keyword>
<keyword id="KW-0678">Repressor</keyword>
<keyword id="KW-0804">Transcription</keyword>
<keyword id="KW-0805">Transcription regulation</keyword>
<organism>
    <name type="scientific">Yersinia pestis</name>
    <dbReference type="NCBI Taxonomy" id="632"/>
    <lineage>
        <taxon>Bacteria</taxon>
        <taxon>Pseudomonadati</taxon>
        <taxon>Pseudomonadota</taxon>
        <taxon>Gammaproteobacteria</taxon>
        <taxon>Enterobacterales</taxon>
        <taxon>Yersiniaceae</taxon>
        <taxon>Yersinia</taxon>
    </lineage>
</organism>
<evidence type="ECO:0000255" key="1">
    <source>
        <dbReference type="HAMAP-Rule" id="MF_01449"/>
    </source>
</evidence>
<evidence type="ECO:0000305" key="2"/>
<gene>
    <name evidence="1" type="primary">sgrR</name>
    <name type="ordered locus">YPO0524</name>
    <name type="ordered locus">y3650</name>
    <name type="ordered locus">YP_3655</name>
</gene>